<protein>
    <recommendedName>
        <fullName evidence="1">Protein translocase subunit SecA 2</fullName>
        <ecNumber evidence="1">7.4.2.8</ecNumber>
    </recommendedName>
</protein>
<reference key="1">
    <citation type="journal article" date="2001" name="Nature">
        <title>Massive gene decay in the leprosy bacillus.</title>
        <authorList>
            <person name="Cole S.T."/>
            <person name="Eiglmeier K."/>
            <person name="Parkhill J."/>
            <person name="James K.D."/>
            <person name="Thomson N.R."/>
            <person name="Wheeler P.R."/>
            <person name="Honore N."/>
            <person name="Garnier T."/>
            <person name="Churcher C.M."/>
            <person name="Harris D.E."/>
            <person name="Mungall K.L."/>
            <person name="Basham D."/>
            <person name="Brown D."/>
            <person name="Chillingworth T."/>
            <person name="Connor R."/>
            <person name="Davies R.M."/>
            <person name="Devlin K."/>
            <person name="Duthoy S."/>
            <person name="Feltwell T."/>
            <person name="Fraser A."/>
            <person name="Hamlin N."/>
            <person name="Holroyd S."/>
            <person name="Hornsby T."/>
            <person name="Jagels K."/>
            <person name="Lacroix C."/>
            <person name="Maclean J."/>
            <person name="Moule S."/>
            <person name="Murphy L.D."/>
            <person name="Oliver K."/>
            <person name="Quail M.A."/>
            <person name="Rajandream M.A."/>
            <person name="Rutherford K.M."/>
            <person name="Rutter S."/>
            <person name="Seeger K."/>
            <person name="Simon S."/>
            <person name="Simmonds M."/>
            <person name="Skelton J."/>
            <person name="Squares R."/>
            <person name="Squares S."/>
            <person name="Stevens K."/>
            <person name="Taylor K."/>
            <person name="Whitehead S."/>
            <person name="Woodward J.R."/>
            <person name="Barrell B.G."/>
        </authorList>
    </citation>
    <scope>NUCLEOTIDE SEQUENCE [LARGE SCALE GENOMIC DNA]</scope>
    <source>
        <strain>TN</strain>
    </source>
</reference>
<sequence>MSKTPRTQPGRLSSRFWRLLGASTDKNLNYSSAEVTAAAAYHKEAADLGDEQLRKACGLLNLNDLADSRDVPQFLAIVREASERSTGLRPFDVQLLGALRMLAGDVIEMATGEGKTLAGAIAAAGYALAGRHVHVVTINDYLARRDAEWMGPLLEAIGLTVGWITAESTREDRKAAYGCDVTYASVNEIGFDVLRDQLVTDVDDLVSPHPDVALIDEADSVLVDEALVPLVLAGATHRETPRLEIIKLVGELSAESDYDTDSDSRNVHLTDVGARKVEKALGGIDLYSEEHVGTTLTEVNVALHAHVLLQRDVHYIVRDDAVHLVNASRGRIAQLQRWPDGLQAAVEAKEGIETTETGEVLDTITVQALINRYATVCGMTGTALAAGEQLRQFYKLGVSPIPPNTPNIRDDASDRVYITAAAKNDAIVAHLAEVHETGQPVLVGTRNVAESEELHERLLRHGVPAVVLNAKNDAEEARFIAEAGKFGAVTVSTQMAGRGTDIRLGGSDESDHDRVVELGGLHVVGTGRHHTERLDNQLRGRAGRQGDPGSSVFFSSWEDDVIAANLDRNKLPMQTDEDGRIISLKTTGLLDHAQRVAEGRLLDVHANTWRYNQLIAQQRAIIVDRRNALLSSATAREELAELAPKRYEELAQALPKEEAEERLETICRLIMLYHLDRGWADHLAYLADIRESIHLRALGRQSPLDEFHRLAVNAFALLAADAIEAAQQTFETANILDGAPGLDLSKLARPTSTWTYMVNDAPLSDDTLSPLSLPGVFR</sequence>
<comment type="function">
    <text evidence="1">Part of the Sec protein translocase complex. Interacts with the SecYEG preprotein conducting channel. Has a central role in coupling the hydrolysis of ATP to the transfer of proteins into and across the cell membrane, serving as an ATP-driven molecular motor driving the stepwise translocation of polypeptide chains across the membrane.</text>
</comment>
<comment type="catalytic activity">
    <reaction evidence="1">
        <text>ATP + H2O + cellular proteinSide 1 = ADP + phosphate + cellular proteinSide 2.</text>
        <dbReference type="EC" id="7.4.2.8"/>
    </reaction>
</comment>
<comment type="subunit">
    <text evidence="1">Monomer and homodimer. Part of the essential Sec protein translocation apparatus which comprises SecA, SecYEG and auxiliary proteins SecDF. Other proteins may also be involved.</text>
</comment>
<comment type="subcellular location">
    <subcellularLocation>
        <location evidence="1">Cell membrane</location>
        <topology evidence="1">Peripheral membrane protein</topology>
        <orientation evidence="1">Cytoplasmic side</orientation>
    </subcellularLocation>
    <subcellularLocation>
        <location evidence="1">Cytoplasm</location>
    </subcellularLocation>
    <text evidence="1">Distribution is 50-50.</text>
</comment>
<comment type="similarity">
    <text evidence="1">Belongs to the SecA family.</text>
</comment>
<evidence type="ECO:0000255" key="1">
    <source>
        <dbReference type="HAMAP-Rule" id="MF_01382"/>
    </source>
</evidence>
<gene>
    <name evidence="1" type="primary">secA2</name>
    <name type="ordered locus">ML2082</name>
    <name type="ORF">MLCB1788.45c</name>
</gene>
<dbReference type="EC" id="7.4.2.8" evidence="1"/>
<dbReference type="EMBL" id="AL008609">
    <property type="protein sequence ID" value="CAA15477.1"/>
    <property type="molecule type" value="Genomic_DNA"/>
</dbReference>
<dbReference type="EMBL" id="AL583924">
    <property type="protein sequence ID" value="CAC31037.1"/>
    <property type="molecule type" value="Genomic_DNA"/>
</dbReference>
<dbReference type="PIR" id="T44761">
    <property type="entry name" value="T44761"/>
</dbReference>
<dbReference type="RefSeq" id="NP_302388.1">
    <property type="nucleotide sequence ID" value="NC_002677.1"/>
</dbReference>
<dbReference type="RefSeq" id="WP_010908708.1">
    <property type="nucleotide sequence ID" value="NC_002677.1"/>
</dbReference>
<dbReference type="SMR" id="O32922"/>
<dbReference type="STRING" id="272631.gene:17575934"/>
<dbReference type="KEGG" id="mle:ML2082"/>
<dbReference type="PATRIC" id="fig|272631.5.peg.3915"/>
<dbReference type="Leproma" id="ML2082"/>
<dbReference type="eggNOG" id="COG0653">
    <property type="taxonomic scope" value="Bacteria"/>
</dbReference>
<dbReference type="HOGENOM" id="CLU_005314_3_2_11"/>
<dbReference type="OrthoDB" id="9805579at2"/>
<dbReference type="Proteomes" id="UP000000806">
    <property type="component" value="Chromosome"/>
</dbReference>
<dbReference type="GO" id="GO:0031522">
    <property type="term" value="C:cell envelope Sec protein transport complex"/>
    <property type="evidence" value="ECO:0007669"/>
    <property type="project" value="TreeGrafter"/>
</dbReference>
<dbReference type="GO" id="GO:0005829">
    <property type="term" value="C:cytosol"/>
    <property type="evidence" value="ECO:0007669"/>
    <property type="project" value="TreeGrafter"/>
</dbReference>
<dbReference type="GO" id="GO:0005886">
    <property type="term" value="C:plasma membrane"/>
    <property type="evidence" value="ECO:0007669"/>
    <property type="project" value="UniProtKB-SubCell"/>
</dbReference>
<dbReference type="GO" id="GO:0005524">
    <property type="term" value="F:ATP binding"/>
    <property type="evidence" value="ECO:0007669"/>
    <property type="project" value="UniProtKB-UniRule"/>
</dbReference>
<dbReference type="GO" id="GO:0008564">
    <property type="term" value="F:protein-exporting ATPase activity"/>
    <property type="evidence" value="ECO:0007669"/>
    <property type="project" value="UniProtKB-EC"/>
</dbReference>
<dbReference type="GO" id="GO:0065002">
    <property type="term" value="P:intracellular protein transmembrane transport"/>
    <property type="evidence" value="ECO:0007669"/>
    <property type="project" value="UniProtKB-UniRule"/>
</dbReference>
<dbReference type="GO" id="GO:0017038">
    <property type="term" value="P:protein import"/>
    <property type="evidence" value="ECO:0007669"/>
    <property type="project" value="InterPro"/>
</dbReference>
<dbReference type="GO" id="GO:0006605">
    <property type="term" value="P:protein targeting"/>
    <property type="evidence" value="ECO:0007669"/>
    <property type="project" value="UniProtKB-UniRule"/>
</dbReference>
<dbReference type="GO" id="GO:0043952">
    <property type="term" value="P:protein transport by the Sec complex"/>
    <property type="evidence" value="ECO:0007669"/>
    <property type="project" value="TreeGrafter"/>
</dbReference>
<dbReference type="CDD" id="cd17928">
    <property type="entry name" value="DEXDc_SecA"/>
    <property type="match status" value="1"/>
</dbReference>
<dbReference type="CDD" id="cd18803">
    <property type="entry name" value="SF2_C_secA"/>
    <property type="match status" value="1"/>
</dbReference>
<dbReference type="FunFam" id="3.40.50.300:FF:000429">
    <property type="entry name" value="Preprotein translocase subunit SecA"/>
    <property type="match status" value="1"/>
</dbReference>
<dbReference type="FunFam" id="3.90.1440.10:FF:000004">
    <property type="entry name" value="Protein translocase subunit SecA"/>
    <property type="match status" value="1"/>
</dbReference>
<dbReference type="Gene3D" id="1.10.3060.10">
    <property type="entry name" value="Helical scaffold and wing domains of SecA"/>
    <property type="match status" value="1"/>
</dbReference>
<dbReference type="Gene3D" id="3.40.50.300">
    <property type="entry name" value="P-loop containing nucleotide triphosphate hydrolases"/>
    <property type="match status" value="3"/>
</dbReference>
<dbReference type="Gene3D" id="3.90.1440.10">
    <property type="entry name" value="SecA, preprotein cross-linking domain"/>
    <property type="match status" value="1"/>
</dbReference>
<dbReference type="HAMAP" id="MF_01382">
    <property type="entry name" value="SecA"/>
    <property type="match status" value="1"/>
</dbReference>
<dbReference type="InterPro" id="IPR014001">
    <property type="entry name" value="Helicase_ATP-bd"/>
</dbReference>
<dbReference type="InterPro" id="IPR001650">
    <property type="entry name" value="Helicase_C-like"/>
</dbReference>
<dbReference type="InterPro" id="IPR027417">
    <property type="entry name" value="P-loop_NTPase"/>
</dbReference>
<dbReference type="InterPro" id="IPR000185">
    <property type="entry name" value="SecA"/>
</dbReference>
<dbReference type="InterPro" id="IPR026389">
    <property type="entry name" value="SecA_Actinobact-type"/>
</dbReference>
<dbReference type="InterPro" id="IPR020937">
    <property type="entry name" value="SecA_CS"/>
</dbReference>
<dbReference type="InterPro" id="IPR011115">
    <property type="entry name" value="SecA_DEAD"/>
</dbReference>
<dbReference type="InterPro" id="IPR014018">
    <property type="entry name" value="SecA_motor_DEAD"/>
</dbReference>
<dbReference type="InterPro" id="IPR011130">
    <property type="entry name" value="SecA_preprotein_X-link_dom"/>
</dbReference>
<dbReference type="InterPro" id="IPR044722">
    <property type="entry name" value="SecA_SF2_C"/>
</dbReference>
<dbReference type="InterPro" id="IPR011116">
    <property type="entry name" value="SecA_Wing/Scaffold"/>
</dbReference>
<dbReference type="InterPro" id="IPR036266">
    <property type="entry name" value="SecA_Wing/Scaffold_sf"/>
</dbReference>
<dbReference type="InterPro" id="IPR036670">
    <property type="entry name" value="SecA_X-link_sf"/>
</dbReference>
<dbReference type="NCBIfam" id="TIGR04221">
    <property type="entry name" value="SecA2_Mycobac"/>
    <property type="match status" value="1"/>
</dbReference>
<dbReference type="PANTHER" id="PTHR30612:SF0">
    <property type="entry name" value="CHLOROPLAST PROTEIN-TRANSPORTING ATPASE"/>
    <property type="match status" value="1"/>
</dbReference>
<dbReference type="PANTHER" id="PTHR30612">
    <property type="entry name" value="SECA INNER MEMBRANE COMPONENT OF SEC PROTEIN SECRETION SYSTEM"/>
    <property type="match status" value="1"/>
</dbReference>
<dbReference type="Pfam" id="PF21090">
    <property type="entry name" value="P-loop_SecA"/>
    <property type="match status" value="1"/>
</dbReference>
<dbReference type="Pfam" id="PF07517">
    <property type="entry name" value="SecA_DEAD"/>
    <property type="match status" value="1"/>
</dbReference>
<dbReference type="Pfam" id="PF01043">
    <property type="entry name" value="SecA_PP_bind"/>
    <property type="match status" value="1"/>
</dbReference>
<dbReference type="Pfam" id="PF07516">
    <property type="entry name" value="SecA_SW"/>
    <property type="match status" value="1"/>
</dbReference>
<dbReference type="PRINTS" id="PR00906">
    <property type="entry name" value="SECA"/>
</dbReference>
<dbReference type="SMART" id="SM00957">
    <property type="entry name" value="SecA_DEAD"/>
    <property type="match status" value="1"/>
</dbReference>
<dbReference type="SMART" id="SM00958">
    <property type="entry name" value="SecA_PP_bind"/>
    <property type="match status" value="1"/>
</dbReference>
<dbReference type="SUPFAM" id="SSF81886">
    <property type="entry name" value="Helical scaffold and wing domains of SecA"/>
    <property type="match status" value="1"/>
</dbReference>
<dbReference type="SUPFAM" id="SSF52540">
    <property type="entry name" value="P-loop containing nucleoside triphosphate hydrolases"/>
    <property type="match status" value="2"/>
</dbReference>
<dbReference type="SUPFAM" id="SSF81767">
    <property type="entry name" value="Pre-protein crosslinking domain of SecA"/>
    <property type="match status" value="1"/>
</dbReference>
<dbReference type="PROSITE" id="PS01312">
    <property type="entry name" value="SECA"/>
    <property type="match status" value="1"/>
</dbReference>
<dbReference type="PROSITE" id="PS51196">
    <property type="entry name" value="SECA_MOTOR_DEAD"/>
    <property type="match status" value="1"/>
</dbReference>
<proteinExistence type="inferred from homology"/>
<accession>O32922</accession>
<keyword id="KW-0067">ATP-binding</keyword>
<keyword id="KW-1003">Cell membrane</keyword>
<keyword id="KW-0963">Cytoplasm</keyword>
<keyword id="KW-0472">Membrane</keyword>
<keyword id="KW-0547">Nucleotide-binding</keyword>
<keyword id="KW-0653">Protein transport</keyword>
<keyword id="KW-1185">Reference proteome</keyword>
<keyword id="KW-1278">Translocase</keyword>
<keyword id="KW-0811">Translocation</keyword>
<keyword id="KW-0813">Transport</keyword>
<name>SECA2_MYCLE</name>
<feature type="chain" id="PRO_0000109595" description="Protein translocase subunit SecA 2">
    <location>
        <begin position="1"/>
        <end position="778"/>
    </location>
</feature>
<feature type="binding site" evidence="1">
    <location>
        <position position="94"/>
    </location>
    <ligand>
        <name>ATP</name>
        <dbReference type="ChEBI" id="CHEBI:30616"/>
    </ligand>
</feature>
<feature type="binding site" evidence="1">
    <location>
        <begin position="112"/>
        <end position="116"/>
    </location>
    <ligand>
        <name>ATP</name>
        <dbReference type="ChEBI" id="CHEBI:30616"/>
    </ligand>
</feature>
<feature type="binding site" evidence="1">
    <location>
        <position position="501"/>
    </location>
    <ligand>
        <name>ATP</name>
        <dbReference type="ChEBI" id="CHEBI:30616"/>
    </ligand>
</feature>
<organism>
    <name type="scientific">Mycobacterium leprae (strain TN)</name>
    <dbReference type="NCBI Taxonomy" id="272631"/>
    <lineage>
        <taxon>Bacteria</taxon>
        <taxon>Bacillati</taxon>
        <taxon>Actinomycetota</taxon>
        <taxon>Actinomycetes</taxon>
        <taxon>Mycobacteriales</taxon>
        <taxon>Mycobacteriaceae</taxon>
        <taxon>Mycobacterium</taxon>
    </lineage>
</organism>